<evidence type="ECO:0000255" key="1">
    <source>
        <dbReference type="HAMAP-Rule" id="MF_00005"/>
    </source>
</evidence>
<protein>
    <recommendedName>
        <fullName evidence="1">Argininosuccinate synthase</fullName>
        <ecNumber evidence="1">6.3.4.5</ecNumber>
    </recommendedName>
    <alternativeName>
        <fullName evidence="1">Citrulline--aspartate ligase</fullName>
    </alternativeName>
</protein>
<dbReference type="EC" id="6.3.4.5" evidence="1"/>
<dbReference type="EMBL" id="CP000462">
    <property type="protein sequence ID" value="ABK39577.1"/>
    <property type="molecule type" value="Genomic_DNA"/>
</dbReference>
<dbReference type="RefSeq" id="WP_011704563.1">
    <property type="nucleotide sequence ID" value="NC_008570.1"/>
</dbReference>
<dbReference type="RefSeq" id="YP_855129.1">
    <property type="nucleotide sequence ID" value="NC_008570.1"/>
</dbReference>
<dbReference type="SMR" id="A0KFV3"/>
<dbReference type="STRING" id="380703.AHA_0596"/>
<dbReference type="EnsemblBacteria" id="ABK39577">
    <property type="protein sequence ID" value="ABK39577"/>
    <property type="gene ID" value="AHA_0596"/>
</dbReference>
<dbReference type="GeneID" id="4489263"/>
<dbReference type="KEGG" id="aha:AHA_0596"/>
<dbReference type="PATRIC" id="fig|380703.7.peg.593"/>
<dbReference type="eggNOG" id="COG0137">
    <property type="taxonomic scope" value="Bacteria"/>
</dbReference>
<dbReference type="HOGENOM" id="CLU_032784_4_2_6"/>
<dbReference type="OrthoDB" id="9801641at2"/>
<dbReference type="UniPathway" id="UPA00068">
    <property type="reaction ID" value="UER00113"/>
</dbReference>
<dbReference type="Proteomes" id="UP000000756">
    <property type="component" value="Chromosome"/>
</dbReference>
<dbReference type="GO" id="GO:0005737">
    <property type="term" value="C:cytoplasm"/>
    <property type="evidence" value="ECO:0007669"/>
    <property type="project" value="UniProtKB-SubCell"/>
</dbReference>
<dbReference type="GO" id="GO:0004055">
    <property type="term" value="F:argininosuccinate synthase activity"/>
    <property type="evidence" value="ECO:0007669"/>
    <property type="project" value="UniProtKB-UniRule"/>
</dbReference>
<dbReference type="GO" id="GO:0005524">
    <property type="term" value="F:ATP binding"/>
    <property type="evidence" value="ECO:0007669"/>
    <property type="project" value="UniProtKB-UniRule"/>
</dbReference>
<dbReference type="GO" id="GO:0000053">
    <property type="term" value="P:argininosuccinate metabolic process"/>
    <property type="evidence" value="ECO:0007669"/>
    <property type="project" value="TreeGrafter"/>
</dbReference>
<dbReference type="GO" id="GO:0006526">
    <property type="term" value="P:L-arginine biosynthetic process"/>
    <property type="evidence" value="ECO:0007669"/>
    <property type="project" value="UniProtKB-UniRule"/>
</dbReference>
<dbReference type="GO" id="GO:0000050">
    <property type="term" value="P:urea cycle"/>
    <property type="evidence" value="ECO:0007669"/>
    <property type="project" value="TreeGrafter"/>
</dbReference>
<dbReference type="CDD" id="cd01999">
    <property type="entry name" value="ASS"/>
    <property type="match status" value="1"/>
</dbReference>
<dbReference type="FunFam" id="3.40.50.620:FF:000019">
    <property type="entry name" value="Argininosuccinate synthase"/>
    <property type="match status" value="1"/>
</dbReference>
<dbReference type="FunFam" id="3.90.1260.10:FF:000007">
    <property type="entry name" value="Argininosuccinate synthase"/>
    <property type="match status" value="1"/>
</dbReference>
<dbReference type="Gene3D" id="3.90.1260.10">
    <property type="entry name" value="Argininosuccinate synthetase, chain A, domain 2"/>
    <property type="match status" value="1"/>
</dbReference>
<dbReference type="Gene3D" id="3.40.50.620">
    <property type="entry name" value="HUPs"/>
    <property type="match status" value="1"/>
</dbReference>
<dbReference type="Gene3D" id="1.20.5.470">
    <property type="entry name" value="Single helix bin"/>
    <property type="match status" value="1"/>
</dbReference>
<dbReference type="HAMAP" id="MF_00005">
    <property type="entry name" value="Arg_succ_synth_type1"/>
    <property type="match status" value="1"/>
</dbReference>
<dbReference type="InterPro" id="IPR048268">
    <property type="entry name" value="Arginosuc_syn_C"/>
</dbReference>
<dbReference type="InterPro" id="IPR048267">
    <property type="entry name" value="Arginosuc_syn_N"/>
</dbReference>
<dbReference type="InterPro" id="IPR001518">
    <property type="entry name" value="Arginosuc_synth"/>
</dbReference>
<dbReference type="InterPro" id="IPR018223">
    <property type="entry name" value="Arginosuc_synth_CS"/>
</dbReference>
<dbReference type="InterPro" id="IPR023434">
    <property type="entry name" value="Arginosuc_synth_type_1_subfam"/>
</dbReference>
<dbReference type="InterPro" id="IPR024074">
    <property type="entry name" value="AS_cat/multimer_dom_body"/>
</dbReference>
<dbReference type="InterPro" id="IPR014729">
    <property type="entry name" value="Rossmann-like_a/b/a_fold"/>
</dbReference>
<dbReference type="NCBIfam" id="TIGR00032">
    <property type="entry name" value="argG"/>
    <property type="match status" value="1"/>
</dbReference>
<dbReference type="NCBIfam" id="NF001770">
    <property type="entry name" value="PRK00509.1"/>
    <property type="match status" value="1"/>
</dbReference>
<dbReference type="PANTHER" id="PTHR11587">
    <property type="entry name" value="ARGININOSUCCINATE SYNTHASE"/>
    <property type="match status" value="1"/>
</dbReference>
<dbReference type="PANTHER" id="PTHR11587:SF2">
    <property type="entry name" value="ARGININOSUCCINATE SYNTHASE"/>
    <property type="match status" value="1"/>
</dbReference>
<dbReference type="Pfam" id="PF20979">
    <property type="entry name" value="Arginosuc_syn_C"/>
    <property type="match status" value="1"/>
</dbReference>
<dbReference type="Pfam" id="PF00764">
    <property type="entry name" value="Arginosuc_synth"/>
    <property type="match status" value="1"/>
</dbReference>
<dbReference type="SUPFAM" id="SSF52402">
    <property type="entry name" value="Adenine nucleotide alpha hydrolases-like"/>
    <property type="match status" value="1"/>
</dbReference>
<dbReference type="SUPFAM" id="SSF69864">
    <property type="entry name" value="Argininosuccinate synthetase, C-terminal domain"/>
    <property type="match status" value="1"/>
</dbReference>
<dbReference type="PROSITE" id="PS00564">
    <property type="entry name" value="ARGININOSUCCIN_SYN_1"/>
    <property type="match status" value="1"/>
</dbReference>
<dbReference type="PROSITE" id="PS00565">
    <property type="entry name" value="ARGININOSUCCIN_SYN_2"/>
    <property type="match status" value="1"/>
</dbReference>
<comment type="catalytic activity">
    <reaction evidence="1">
        <text>L-citrulline + L-aspartate + ATP = 2-(N(omega)-L-arginino)succinate + AMP + diphosphate + H(+)</text>
        <dbReference type="Rhea" id="RHEA:10932"/>
        <dbReference type="ChEBI" id="CHEBI:15378"/>
        <dbReference type="ChEBI" id="CHEBI:29991"/>
        <dbReference type="ChEBI" id="CHEBI:30616"/>
        <dbReference type="ChEBI" id="CHEBI:33019"/>
        <dbReference type="ChEBI" id="CHEBI:57472"/>
        <dbReference type="ChEBI" id="CHEBI:57743"/>
        <dbReference type="ChEBI" id="CHEBI:456215"/>
        <dbReference type="EC" id="6.3.4.5"/>
    </reaction>
</comment>
<comment type="pathway">
    <text evidence="1">Amino-acid biosynthesis; L-arginine biosynthesis; L-arginine from L-ornithine and carbamoyl phosphate: step 2/3.</text>
</comment>
<comment type="subunit">
    <text evidence="1">Homotetramer.</text>
</comment>
<comment type="subcellular location">
    <subcellularLocation>
        <location evidence="1">Cytoplasm</location>
    </subcellularLocation>
</comment>
<comment type="similarity">
    <text evidence="1">Belongs to the argininosuccinate synthase family. Type 1 subfamily.</text>
</comment>
<accession>A0KFV3</accession>
<proteinExistence type="inferred from homology"/>
<keyword id="KW-0028">Amino-acid biosynthesis</keyword>
<keyword id="KW-0055">Arginine biosynthesis</keyword>
<keyword id="KW-0067">ATP-binding</keyword>
<keyword id="KW-0963">Cytoplasm</keyword>
<keyword id="KW-0436">Ligase</keyword>
<keyword id="KW-0547">Nucleotide-binding</keyword>
<keyword id="KW-1185">Reference proteome</keyword>
<name>ASSY_AERHH</name>
<sequence>MSGINKIVLAYSGGLDTSAIIPWLKENYDAEIIAFVADVGQERDDLEGIEQKAIASGATKCIVKDLREEFVKEYVYPTLKTGAVYEGTYLLGTSMARPVIAKAMVEAALAEGADAISHGCTGKGNDQVRFEGAVAALAPQLKVIAPWRLWDMRSREDLLAYLETRNIPCKATLKKIYSRDANAWHISTEGGELESTWNEPSEAVWQWTVPAEQAPDQPEYVKLTVAQGEVVAVDDQPLSPHQILTTLNERAGKHGVGRIDITENRMVGMKSRGCYETPGGTVMVAALRAVEELVLDRPTRAWREKLGAEFSHLVYDGRWFTPLCKAIVASANAIAEDLDGEVVLKMYKGQVTAVQKKSPNSLYSEDFATFGADEVYDQSHAEGFIRLYTLASRIRAMKEQHQAIGGDHTHG</sequence>
<reference key="1">
    <citation type="journal article" date="2006" name="J. Bacteriol.">
        <title>Genome sequence of Aeromonas hydrophila ATCC 7966T: jack of all trades.</title>
        <authorList>
            <person name="Seshadri R."/>
            <person name="Joseph S.W."/>
            <person name="Chopra A.K."/>
            <person name="Sha J."/>
            <person name="Shaw J."/>
            <person name="Graf J."/>
            <person name="Haft D.H."/>
            <person name="Wu M."/>
            <person name="Ren Q."/>
            <person name="Rosovitz M.J."/>
            <person name="Madupu R."/>
            <person name="Tallon L."/>
            <person name="Kim M."/>
            <person name="Jin S."/>
            <person name="Vuong H."/>
            <person name="Stine O.C."/>
            <person name="Ali A."/>
            <person name="Horneman A.J."/>
            <person name="Heidelberg J.F."/>
        </authorList>
    </citation>
    <scope>NUCLEOTIDE SEQUENCE [LARGE SCALE GENOMIC DNA]</scope>
    <source>
        <strain>ATCC 7966 / DSM 30187 / BCRC 13018 / CCUG 14551 / JCM 1027 / KCTC 2358 / NCIMB 9240 / NCTC 8049</strain>
    </source>
</reference>
<gene>
    <name evidence="1" type="primary">argG</name>
    <name type="ordered locus">AHA_0596</name>
</gene>
<feature type="chain" id="PRO_0000321297" description="Argininosuccinate synthase">
    <location>
        <begin position="1"/>
        <end position="411"/>
    </location>
</feature>
<feature type="binding site" evidence="1">
    <location>
        <begin position="10"/>
        <end position="18"/>
    </location>
    <ligand>
        <name>ATP</name>
        <dbReference type="ChEBI" id="CHEBI:30616"/>
    </ligand>
</feature>
<feature type="binding site" evidence="1">
    <location>
        <position position="37"/>
    </location>
    <ligand>
        <name>ATP</name>
        <dbReference type="ChEBI" id="CHEBI:30616"/>
    </ligand>
</feature>
<feature type="binding site" evidence="1">
    <location>
        <position position="89"/>
    </location>
    <ligand>
        <name>L-citrulline</name>
        <dbReference type="ChEBI" id="CHEBI:57743"/>
    </ligand>
</feature>
<feature type="binding site" evidence="1">
    <location>
        <position position="94"/>
    </location>
    <ligand>
        <name>L-citrulline</name>
        <dbReference type="ChEBI" id="CHEBI:57743"/>
    </ligand>
</feature>
<feature type="binding site" evidence="1">
    <location>
        <position position="119"/>
    </location>
    <ligand>
        <name>ATP</name>
        <dbReference type="ChEBI" id="CHEBI:30616"/>
    </ligand>
</feature>
<feature type="binding site" evidence="1">
    <location>
        <position position="121"/>
    </location>
    <ligand>
        <name>L-aspartate</name>
        <dbReference type="ChEBI" id="CHEBI:29991"/>
    </ligand>
</feature>
<feature type="binding site" evidence="1">
    <location>
        <position position="125"/>
    </location>
    <ligand>
        <name>L-aspartate</name>
        <dbReference type="ChEBI" id="CHEBI:29991"/>
    </ligand>
</feature>
<feature type="binding site" evidence="1">
    <location>
        <position position="125"/>
    </location>
    <ligand>
        <name>L-citrulline</name>
        <dbReference type="ChEBI" id="CHEBI:57743"/>
    </ligand>
</feature>
<feature type="binding site" evidence="1">
    <location>
        <position position="126"/>
    </location>
    <ligand>
        <name>L-aspartate</name>
        <dbReference type="ChEBI" id="CHEBI:29991"/>
    </ligand>
</feature>
<feature type="binding site" evidence="1">
    <location>
        <position position="129"/>
    </location>
    <ligand>
        <name>L-citrulline</name>
        <dbReference type="ChEBI" id="CHEBI:57743"/>
    </ligand>
</feature>
<feature type="binding site" evidence="1">
    <location>
        <position position="178"/>
    </location>
    <ligand>
        <name>L-citrulline</name>
        <dbReference type="ChEBI" id="CHEBI:57743"/>
    </ligand>
</feature>
<feature type="binding site" evidence="1">
    <location>
        <position position="187"/>
    </location>
    <ligand>
        <name>L-citrulline</name>
        <dbReference type="ChEBI" id="CHEBI:57743"/>
    </ligand>
</feature>
<feature type="binding site" evidence="1">
    <location>
        <position position="263"/>
    </location>
    <ligand>
        <name>L-citrulline</name>
        <dbReference type="ChEBI" id="CHEBI:57743"/>
    </ligand>
</feature>
<feature type="binding site" evidence="1">
    <location>
        <position position="275"/>
    </location>
    <ligand>
        <name>L-citrulline</name>
        <dbReference type="ChEBI" id="CHEBI:57743"/>
    </ligand>
</feature>
<organism>
    <name type="scientific">Aeromonas hydrophila subsp. hydrophila (strain ATCC 7966 / DSM 30187 / BCRC 13018 / CCUG 14551 / JCM 1027 / KCTC 2358 / NCIMB 9240 / NCTC 8049)</name>
    <dbReference type="NCBI Taxonomy" id="380703"/>
    <lineage>
        <taxon>Bacteria</taxon>
        <taxon>Pseudomonadati</taxon>
        <taxon>Pseudomonadota</taxon>
        <taxon>Gammaproteobacteria</taxon>
        <taxon>Aeromonadales</taxon>
        <taxon>Aeromonadaceae</taxon>
        <taxon>Aeromonas</taxon>
    </lineage>
</organism>